<dbReference type="EMBL" id="CP000323">
    <property type="protein sequence ID" value="ABE74439.1"/>
    <property type="molecule type" value="Genomic_DNA"/>
</dbReference>
<dbReference type="RefSeq" id="WP_011513006.1">
    <property type="nucleotide sequence ID" value="NC_007969.1"/>
</dbReference>
<dbReference type="SMR" id="Q1QD14"/>
<dbReference type="STRING" id="335284.Pcryo_0656"/>
<dbReference type="KEGG" id="pcr:Pcryo_0656"/>
<dbReference type="eggNOG" id="COG1160">
    <property type="taxonomic scope" value="Bacteria"/>
</dbReference>
<dbReference type="HOGENOM" id="CLU_016077_6_2_6"/>
<dbReference type="Proteomes" id="UP000002425">
    <property type="component" value="Chromosome"/>
</dbReference>
<dbReference type="GO" id="GO:0005525">
    <property type="term" value="F:GTP binding"/>
    <property type="evidence" value="ECO:0007669"/>
    <property type="project" value="UniProtKB-UniRule"/>
</dbReference>
<dbReference type="GO" id="GO:0043022">
    <property type="term" value="F:ribosome binding"/>
    <property type="evidence" value="ECO:0007669"/>
    <property type="project" value="TreeGrafter"/>
</dbReference>
<dbReference type="GO" id="GO:0042254">
    <property type="term" value="P:ribosome biogenesis"/>
    <property type="evidence" value="ECO:0007669"/>
    <property type="project" value="UniProtKB-KW"/>
</dbReference>
<dbReference type="CDD" id="cd01894">
    <property type="entry name" value="EngA1"/>
    <property type="match status" value="1"/>
</dbReference>
<dbReference type="CDD" id="cd01895">
    <property type="entry name" value="EngA2"/>
    <property type="match status" value="1"/>
</dbReference>
<dbReference type="FunFam" id="3.30.300.20:FF:000004">
    <property type="entry name" value="GTPase Der"/>
    <property type="match status" value="1"/>
</dbReference>
<dbReference type="FunFam" id="3.40.50.300:FF:000040">
    <property type="entry name" value="GTPase Der"/>
    <property type="match status" value="1"/>
</dbReference>
<dbReference type="FunFam" id="3.40.50.300:FF:000057">
    <property type="entry name" value="GTPase Der"/>
    <property type="match status" value="1"/>
</dbReference>
<dbReference type="Gene3D" id="3.30.300.20">
    <property type="match status" value="1"/>
</dbReference>
<dbReference type="Gene3D" id="3.40.50.300">
    <property type="entry name" value="P-loop containing nucleotide triphosphate hydrolases"/>
    <property type="match status" value="2"/>
</dbReference>
<dbReference type="HAMAP" id="MF_00195">
    <property type="entry name" value="GTPase_Der"/>
    <property type="match status" value="1"/>
</dbReference>
<dbReference type="InterPro" id="IPR031166">
    <property type="entry name" value="G_ENGA"/>
</dbReference>
<dbReference type="InterPro" id="IPR006073">
    <property type="entry name" value="GTP-bd"/>
</dbReference>
<dbReference type="InterPro" id="IPR016484">
    <property type="entry name" value="GTPase_Der"/>
</dbReference>
<dbReference type="InterPro" id="IPR032859">
    <property type="entry name" value="KH_dom-like"/>
</dbReference>
<dbReference type="InterPro" id="IPR015946">
    <property type="entry name" value="KH_dom-like_a/b"/>
</dbReference>
<dbReference type="InterPro" id="IPR027417">
    <property type="entry name" value="P-loop_NTPase"/>
</dbReference>
<dbReference type="InterPro" id="IPR005225">
    <property type="entry name" value="Small_GTP-bd"/>
</dbReference>
<dbReference type="NCBIfam" id="TIGR03594">
    <property type="entry name" value="GTPase_EngA"/>
    <property type="match status" value="1"/>
</dbReference>
<dbReference type="NCBIfam" id="TIGR00231">
    <property type="entry name" value="small_GTP"/>
    <property type="match status" value="2"/>
</dbReference>
<dbReference type="PANTHER" id="PTHR43834">
    <property type="entry name" value="GTPASE DER"/>
    <property type="match status" value="1"/>
</dbReference>
<dbReference type="PANTHER" id="PTHR43834:SF6">
    <property type="entry name" value="GTPASE DER"/>
    <property type="match status" value="1"/>
</dbReference>
<dbReference type="Pfam" id="PF14714">
    <property type="entry name" value="KH_dom-like"/>
    <property type="match status" value="1"/>
</dbReference>
<dbReference type="Pfam" id="PF01926">
    <property type="entry name" value="MMR_HSR1"/>
    <property type="match status" value="2"/>
</dbReference>
<dbReference type="PIRSF" id="PIRSF006485">
    <property type="entry name" value="GTP-binding_EngA"/>
    <property type="match status" value="1"/>
</dbReference>
<dbReference type="PRINTS" id="PR00326">
    <property type="entry name" value="GTP1OBG"/>
</dbReference>
<dbReference type="SUPFAM" id="SSF52540">
    <property type="entry name" value="P-loop containing nucleoside triphosphate hydrolases"/>
    <property type="match status" value="2"/>
</dbReference>
<dbReference type="PROSITE" id="PS51712">
    <property type="entry name" value="G_ENGA"/>
    <property type="match status" value="2"/>
</dbReference>
<feature type="chain" id="PRO_1000011709" description="GTPase Der">
    <location>
        <begin position="1"/>
        <end position="480"/>
    </location>
</feature>
<feature type="domain" description="EngA-type G 1">
    <location>
        <begin position="5"/>
        <end position="170"/>
    </location>
</feature>
<feature type="domain" description="EngA-type G 2">
    <location>
        <begin position="178"/>
        <end position="351"/>
    </location>
</feature>
<feature type="domain" description="KH-like" evidence="1">
    <location>
        <begin position="352"/>
        <end position="436"/>
    </location>
</feature>
<feature type="region of interest" description="Disordered" evidence="2">
    <location>
        <begin position="438"/>
        <end position="480"/>
    </location>
</feature>
<feature type="compositionally biased region" description="Polar residues" evidence="2">
    <location>
        <begin position="438"/>
        <end position="454"/>
    </location>
</feature>
<feature type="compositionally biased region" description="Basic and acidic residues" evidence="2">
    <location>
        <begin position="455"/>
        <end position="480"/>
    </location>
</feature>
<feature type="binding site" evidence="1">
    <location>
        <begin position="11"/>
        <end position="18"/>
    </location>
    <ligand>
        <name>GTP</name>
        <dbReference type="ChEBI" id="CHEBI:37565"/>
        <label>1</label>
    </ligand>
</feature>
<feature type="binding site" evidence="1">
    <location>
        <begin position="58"/>
        <end position="62"/>
    </location>
    <ligand>
        <name>GTP</name>
        <dbReference type="ChEBI" id="CHEBI:37565"/>
        <label>1</label>
    </ligand>
</feature>
<feature type="binding site" evidence="1">
    <location>
        <begin position="123"/>
        <end position="126"/>
    </location>
    <ligand>
        <name>GTP</name>
        <dbReference type="ChEBI" id="CHEBI:37565"/>
        <label>1</label>
    </ligand>
</feature>
<feature type="binding site" evidence="1">
    <location>
        <begin position="184"/>
        <end position="191"/>
    </location>
    <ligand>
        <name>GTP</name>
        <dbReference type="ChEBI" id="CHEBI:37565"/>
        <label>2</label>
    </ligand>
</feature>
<feature type="binding site" evidence="1">
    <location>
        <begin position="231"/>
        <end position="235"/>
    </location>
    <ligand>
        <name>GTP</name>
        <dbReference type="ChEBI" id="CHEBI:37565"/>
        <label>2</label>
    </ligand>
</feature>
<feature type="binding site" evidence="1">
    <location>
        <begin position="296"/>
        <end position="299"/>
    </location>
    <ligand>
        <name>GTP</name>
        <dbReference type="ChEBI" id="CHEBI:37565"/>
        <label>2</label>
    </ligand>
</feature>
<name>DER_PSYCK</name>
<proteinExistence type="inferred from homology"/>
<reference key="1">
    <citation type="submission" date="2006-03" db="EMBL/GenBank/DDBJ databases">
        <title>Complete sequence of chromosome of Psychrobacter cryohalolentis K5.</title>
        <authorList>
            <consortium name="US DOE Joint Genome Institute"/>
            <person name="Copeland A."/>
            <person name="Lucas S."/>
            <person name="Lapidus A."/>
            <person name="Barry K."/>
            <person name="Detter J.C."/>
            <person name="Glavina T."/>
            <person name="Hammon N."/>
            <person name="Israni S."/>
            <person name="Dalin E."/>
            <person name="Tice H."/>
            <person name="Pitluck S."/>
            <person name="Brettin T."/>
            <person name="Bruce D."/>
            <person name="Han C."/>
            <person name="Tapia R."/>
            <person name="Sims D.R."/>
            <person name="Gilna P."/>
            <person name="Schmutz J."/>
            <person name="Larimer F."/>
            <person name="Land M."/>
            <person name="Hauser L."/>
            <person name="Kyrpides N."/>
            <person name="Kim E."/>
            <person name="Richardson P."/>
        </authorList>
    </citation>
    <scope>NUCLEOTIDE SEQUENCE [LARGE SCALE GENOMIC DNA]</scope>
    <source>
        <strain>ATCC BAA-1226 / DSM 17306 / VKM B-2378 / K5</strain>
    </source>
</reference>
<organism>
    <name type="scientific">Psychrobacter cryohalolentis (strain ATCC BAA-1226 / DSM 17306 / VKM B-2378 / K5)</name>
    <dbReference type="NCBI Taxonomy" id="335284"/>
    <lineage>
        <taxon>Bacteria</taxon>
        <taxon>Pseudomonadati</taxon>
        <taxon>Pseudomonadota</taxon>
        <taxon>Gammaproteobacteria</taxon>
        <taxon>Moraxellales</taxon>
        <taxon>Moraxellaceae</taxon>
        <taxon>Psychrobacter</taxon>
    </lineage>
</organism>
<gene>
    <name evidence="1" type="primary">der</name>
    <name type="synonym">engA</name>
    <name type="ordered locus">Pcryo_0656</name>
</gene>
<sequence>MSIKPVVALIGRPNVGKSTLFNQFTKSRQALVADLSGLTRDRQYGDATYEDKAFIVVDTGGIGEADDGRGDIDDYMSEQSYTAIHEADIIVFVVDARAGMIGADAEIGKFLHTLGKPVYVVANKVDGVHDSAPAEFYALGLGEPYPMAASHGRGVGNLLEVLTADMPSQENVVEPRGLKLAIIGRPNVGKSTLVNRLLGEDRVVVFDMPGTTRDSIYIPYTREGKDYVLIDTAGVRRRGKIDEKVEKFSVIKTLQAIEDSNVTVIVIDAHEGIVDQDLHMIGYALDAGRALVVAINKWDGLTADQKNYIKIEMDRRFNFIPYVKVHQISALHGTGVGNLYPSILRAYQSSMFEVSTNRLTQILQDAVTANPPPTVAGRRIKLRYAHIGGHNPPVIVIHGNQTGSLPKSYQRYLENQFRQVFKLEGTPLNVVFKLNENPYANKSDTPTKAKTQQLRQRERNRAQKFTTKDKPRFTNKDKKR</sequence>
<protein>
    <recommendedName>
        <fullName evidence="1">GTPase Der</fullName>
    </recommendedName>
    <alternativeName>
        <fullName evidence="1">GTP-binding protein EngA</fullName>
    </alternativeName>
</protein>
<accession>Q1QD14</accession>
<evidence type="ECO:0000255" key="1">
    <source>
        <dbReference type="HAMAP-Rule" id="MF_00195"/>
    </source>
</evidence>
<evidence type="ECO:0000256" key="2">
    <source>
        <dbReference type="SAM" id="MobiDB-lite"/>
    </source>
</evidence>
<keyword id="KW-0342">GTP-binding</keyword>
<keyword id="KW-0547">Nucleotide-binding</keyword>
<keyword id="KW-0677">Repeat</keyword>
<keyword id="KW-0690">Ribosome biogenesis</keyword>
<comment type="function">
    <text evidence="1">GTPase that plays an essential role in the late steps of ribosome biogenesis.</text>
</comment>
<comment type="subunit">
    <text evidence="1">Associates with the 50S ribosomal subunit.</text>
</comment>
<comment type="similarity">
    <text evidence="1">Belongs to the TRAFAC class TrmE-Era-EngA-EngB-Septin-like GTPase superfamily. EngA (Der) GTPase family.</text>
</comment>